<sequence>MSSYFVNPLFSKYKGGETLEPTYYDCRFPQSVARSHTLVYGHGAAAPGFQHPSHHVQDFFHHGTTGISNPGYQQNPCALACHGDATKFYGYEALPRQPLYGTQQEATLAQYPDCKSSNSTNPGEGQGHLSQNSSPSLMFPWMRPHAPGRRNGRQTYSRYQTLELEKEFLFNPYLTRKRRIEVSHALSLTERQVKIWFQNRRMKWKKENNKDKFPGQRGEAEAEAEEEGNEDGEAEEGEDKETEEKEESKE</sequence>
<reference key="1">
    <citation type="journal article" date="2013" name="Nature">
        <title>The zebrafish reference genome sequence and its relationship to the human genome.</title>
        <authorList>
            <person name="Howe K."/>
            <person name="Clark M.D."/>
            <person name="Torroja C.F."/>
            <person name="Torrance J."/>
            <person name="Berthelot C."/>
            <person name="Muffato M."/>
            <person name="Collins J.E."/>
            <person name="Humphray S."/>
            <person name="McLaren K."/>
            <person name="Matthews L."/>
            <person name="McLaren S."/>
            <person name="Sealy I."/>
            <person name="Caccamo M."/>
            <person name="Churcher C."/>
            <person name="Scott C."/>
            <person name="Barrett J.C."/>
            <person name="Koch R."/>
            <person name="Rauch G.J."/>
            <person name="White S."/>
            <person name="Chow W."/>
            <person name="Kilian B."/>
            <person name="Quintais L.T."/>
            <person name="Guerra-Assuncao J.A."/>
            <person name="Zhou Y."/>
            <person name="Gu Y."/>
            <person name="Yen J."/>
            <person name="Vogel J.H."/>
            <person name="Eyre T."/>
            <person name="Redmond S."/>
            <person name="Banerjee R."/>
            <person name="Chi J."/>
            <person name="Fu B."/>
            <person name="Langley E."/>
            <person name="Maguire S.F."/>
            <person name="Laird G.K."/>
            <person name="Lloyd D."/>
            <person name="Kenyon E."/>
            <person name="Donaldson S."/>
            <person name="Sehra H."/>
            <person name="Almeida-King J."/>
            <person name="Loveland J."/>
            <person name="Trevanion S."/>
            <person name="Jones M."/>
            <person name="Quail M."/>
            <person name="Willey D."/>
            <person name="Hunt A."/>
            <person name="Burton J."/>
            <person name="Sims S."/>
            <person name="McLay K."/>
            <person name="Plumb B."/>
            <person name="Davis J."/>
            <person name="Clee C."/>
            <person name="Oliver K."/>
            <person name="Clark R."/>
            <person name="Riddle C."/>
            <person name="Elliot D."/>
            <person name="Threadgold G."/>
            <person name="Harden G."/>
            <person name="Ware D."/>
            <person name="Begum S."/>
            <person name="Mortimore B."/>
            <person name="Kerry G."/>
            <person name="Heath P."/>
            <person name="Phillimore B."/>
            <person name="Tracey A."/>
            <person name="Corby N."/>
            <person name="Dunn M."/>
            <person name="Johnson C."/>
            <person name="Wood J."/>
            <person name="Clark S."/>
            <person name="Pelan S."/>
            <person name="Griffiths G."/>
            <person name="Smith M."/>
            <person name="Glithero R."/>
            <person name="Howden P."/>
            <person name="Barker N."/>
            <person name="Lloyd C."/>
            <person name="Stevens C."/>
            <person name="Harley J."/>
            <person name="Holt K."/>
            <person name="Panagiotidis G."/>
            <person name="Lovell J."/>
            <person name="Beasley H."/>
            <person name="Henderson C."/>
            <person name="Gordon D."/>
            <person name="Auger K."/>
            <person name="Wright D."/>
            <person name="Collins J."/>
            <person name="Raisen C."/>
            <person name="Dyer L."/>
            <person name="Leung K."/>
            <person name="Robertson L."/>
            <person name="Ambridge K."/>
            <person name="Leongamornlert D."/>
            <person name="McGuire S."/>
            <person name="Gilderthorp R."/>
            <person name="Griffiths C."/>
            <person name="Manthravadi D."/>
            <person name="Nichol S."/>
            <person name="Barker G."/>
            <person name="Whitehead S."/>
            <person name="Kay M."/>
            <person name="Brown J."/>
            <person name="Murnane C."/>
            <person name="Gray E."/>
            <person name="Humphries M."/>
            <person name="Sycamore N."/>
            <person name="Barker D."/>
            <person name="Saunders D."/>
            <person name="Wallis J."/>
            <person name="Babbage A."/>
            <person name="Hammond S."/>
            <person name="Mashreghi-Mohammadi M."/>
            <person name="Barr L."/>
            <person name="Martin S."/>
            <person name="Wray P."/>
            <person name="Ellington A."/>
            <person name="Matthews N."/>
            <person name="Ellwood M."/>
            <person name="Woodmansey R."/>
            <person name="Clark G."/>
            <person name="Cooper J."/>
            <person name="Tromans A."/>
            <person name="Grafham D."/>
            <person name="Skuce C."/>
            <person name="Pandian R."/>
            <person name="Andrews R."/>
            <person name="Harrison E."/>
            <person name="Kimberley A."/>
            <person name="Garnett J."/>
            <person name="Fosker N."/>
            <person name="Hall R."/>
            <person name="Garner P."/>
            <person name="Kelly D."/>
            <person name="Bird C."/>
            <person name="Palmer S."/>
            <person name="Gehring I."/>
            <person name="Berger A."/>
            <person name="Dooley C.M."/>
            <person name="Ersan-Urun Z."/>
            <person name="Eser C."/>
            <person name="Geiger H."/>
            <person name="Geisler M."/>
            <person name="Karotki L."/>
            <person name="Kirn A."/>
            <person name="Konantz J."/>
            <person name="Konantz M."/>
            <person name="Oberlander M."/>
            <person name="Rudolph-Geiger S."/>
            <person name="Teucke M."/>
            <person name="Lanz C."/>
            <person name="Raddatz G."/>
            <person name="Osoegawa K."/>
            <person name="Zhu B."/>
            <person name="Rapp A."/>
            <person name="Widaa S."/>
            <person name="Langford C."/>
            <person name="Yang F."/>
            <person name="Schuster S.C."/>
            <person name="Carter N.P."/>
            <person name="Harrow J."/>
            <person name="Ning Z."/>
            <person name="Herrero J."/>
            <person name="Searle S.M."/>
            <person name="Enright A."/>
            <person name="Geisler R."/>
            <person name="Plasterk R.H."/>
            <person name="Lee C."/>
            <person name="Westerfield M."/>
            <person name="de Jong P.J."/>
            <person name="Zon L.I."/>
            <person name="Postlethwait J.H."/>
            <person name="Nusslein-Volhard C."/>
            <person name="Hubbard T.J."/>
            <person name="Roest Crollius H."/>
            <person name="Rogers J."/>
            <person name="Stemple D.L."/>
        </authorList>
    </citation>
    <scope>NUCLEOTIDE SEQUENCE [LARGE SCALE GENOMIC DNA]</scope>
    <source>
        <strain>Tuebingen</strain>
    </source>
</reference>
<reference evidence="8" key="2">
    <citation type="submission" date="2004-08" db="EMBL/GenBank/DDBJ databases">
        <authorList>
            <consortium name="NIH - Zebrafish Gene Collection (ZGC) project"/>
        </authorList>
    </citation>
    <scope>NUCLEOTIDE SEQUENCE [LARGE SCALE MRNA]</scope>
</reference>
<reference evidence="7 9" key="3">
    <citation type="journal article" date="2005" name="Evol. Dev.">
        <title>Genomic annotation and transcriptome analysis of the zebrafish (Danio rerio) hox complex with description of a novel member, hoxb13a.</title>
        <authorList>
            <person name="Corredor-Adamez M."/>
            <person name="Welten M.C.M."/>
            <person name="Spaink H.P."/>
            <person name="Jeffery J.E."/>
            <person name="Schoon R.T."/>
            <person name="de Bakker M.A.G."/>
            <person name="Bagowski C.P."/>
            <person name="Meijer A.H."/>
            <person name="Verbeek F.J."/>
            <person name="Richardson M.K."/>
        </authorList>
    </citation>
    <scope>NUCLEOTIDE SEQUENCE [MRNA] OF 55-157</scope>
    <source>
        <strain evidence="5">Tuebingen</strain>
    </source>
</reference>
<reference evidence="7 10" key="4">
    <citation type="journal article" date="1998" name="Development">
        <title>Zebrafish hox genes: genomic organization and modified colinear expression patterns in the trunk.</title>
        <authorList>
            <person name="Prince V.E."/>
            <person name="Joly L."/>
            <person name="Ekker M."/>
            <person name="Ho R.K."/>
        </authorList>
    </citation>
    <scope>NUCLEOTIDE SEQUENCE [MRNA] OF 177-250</scope>
    <scope>DEVELOPMENTAL STAGE</scope>
    <source>
        <tissue evidence="6">Embryo</tissue>
    </source>
</reference>
<proteinExistence type="evidence at transcript level"/>
<organism>
    <name type="scientific">Danio rerio</name>
    <name type="common">Zebrafish</name>
    <name type="synonym">Brachydanio rerio</name>
    <dbReference type="NCBI Taxonomy" id="7955"/>
    <lineage>
        <taxon>Eukaryota</taxon>
        <taxon>Metazoa</taxon>
        <taxon>Chordata</taxon>
        <taxon>Craniata</taxon>
        <taxon>Vertebrata</taxon>
        <taxon>Euteleostomi</taxon>
        <taxon>Actinopterygii</taxon>
        <taxon>Neopterygii</taxon>
        <taxon>Teleostei</taxon>
        <taxon>Ostariophysi</taxon>
        <taxon>Cypriniformes</taxon>
        <taxon>Danionidae</taxon>
        <taxon>Danioninae</taxon>
        <taxon>Danio</taxon>
    </lineage>
</organism>
<comment type="function">
    <text evidence="1">Sequence-specific transcription factor which is part of a developmental regulatory system that provides cells with specific positional identities on the anterior-posterior axis.</text>
</comment>
<comment type="subcellular location">
    <subcellularLocation>
        <location evidence="1 3">Nucleus</location>
    </subcellularLocation>
</comment>
<comment type="developmental stage">
    <text evidence="6">At the 10-somite stage, expressed in the paraxial mesoderm with an anterior expression limit at somite 7. At the 20-somite stage, expressed in the developing CNS with an anterior expression limit adjacent to somite 4.</text>
</comment>
<comment type="similarity">
    <text evidence="2">Belongs to the Antp homeobox family.</text>
</comment>
<protein>
    <recommendedName>
        <fullName>Homeobox protein Hox-C8a</fullName>
    </recommendedName>
</protein>
<evidence type="ECO:0000250" key="1">
    <source>
        <dbReference type="UniProtKB" id="P31273"/>
    </source>
</evidence>
<evidence type="ECO:0000255" key="2"/>
<evidence type="ECO:0000255" key="3">
    <source>
        <dbReference type="PROSITE-ProRule" id="PRU00108"/>
    </source>
</evidence>
<evidence type="ECO:0000256" key="4">
    <source>
        <dbReference type="SAM" id="MobiDB-lite"/>
    </source>
</evidence>
<evidence type="ECO:0000269" key="5">
    <source>
    </source>
</evidence>
<evidence type="ECO:0000269" key="6">
    <source>
    </source>
</evidence>
<evidence type="ECO:0000305" key="7"/>
<evidence type="ECO:0000312" key="8">
    <source>
        <dbReference type="EMBL" id="AAH80255.1"/>
    </source>
</evidence>
<evidence type="ECO:0000312" key="9">
    <source>
        <dbReference type="EMBL" id="AAY67933.1"/>
    </source>
</evidence>
<evidence type="ECO:0000312" key="10">
    <source>
        <dbReference type="EMBL" id="CAA74879.1"/>
    </source>
</evidence>
<feature type="chain" id="PRO_0000248835" description="Homeobox protein Hox-C8a">
    <location>
        <begin position="1"/>
        <end position="250"/>
    </location>
</feature>
<feature type="DNA-binding region" description="Homeobox" evidence="3">
    <location>
        <begin position="149"/>
        <end position="208"/>
    </location>
</feature>
<feature type="region of interest" description="Disordered" evidence="4">
    <location>
        <begin position="112"/>
        <end position="152"/>
    </location>
</feature>
<feature type="region of interest" description="Disordered" evidence="4">
    <location>
        <begin position="206"/>
        <end position="250"/>
    </location>
</feature>
<feature type="short sequence motif" description="Antp-type hexapeptide" evidence="2">
    <location>
        <begin position="138"/>
        <end position="143"/>
    </location>
</feature>
<feature type="compositionally biased region" description="Polar residues" evidence="4">
    <location>
        <begin position="115"/>
        <end position="136"/>
    </location>
</feature>
<feature type="compositionally biased region" description="Basic and acidic residues" evidence="4">
    <location>
        <begin position="206"/>
        <end position="220"/>
    </location>
</feature>
<feature type="compositionally biased region" description="Acidic residues" evidence="4">
    <location>
        <begin position="221"/>
        <end position="241"/>
    </location>
</feature>
<gene>
    <name evidence="9" type="primary">hoxc8a</name>
    <name evidence="10" type="synonym">hoxc8</name>
    <name type="ORF">si:dkey-81p22.5</name>
    <name type="ORF">zgc:91832</name>
</gene>
<name>HXC8A_DANRE</name>
<accession>Q68EH7</accession>
<accession>A2BE64</accession>
<accession>O57369</accession>
<accession>Q4PR88</accession>
<dbReference type="EMBL" id="BX005254">
    <property type="protein sequence ID" value="CAM16418.1"/>
    <property type="molecule type" value="Genomic_DNA"/>
</dbReference>
<dbReference type="EMBL" id="BC080255">
    <property type="protein sequence ID" value="AAH80255.1"/>
    <property type="molecule type" value="mRNA"/>
</dbReference>
<dbReference type="EMBL" id="DQ060555">
    <property type="protein sequence ID" value="AAY67933.1"/>
    <property type="molecule type" value="mRNA"/>
</dbReference>
<dbReference type="EMBL" id="Y14544">
    <property type="protein sequence ID" value="CAA74879.1"/>
    <property type="molecule type" value="mRNA"/>
</dbReference>
<dbReference type="RefSeq" id="NP_001005771.1">
    <property type="nucleotide sequence ID" value="NM_001005771.1"/>
</dbReference>
<dbReference type="SMR" id="Q68EH7"/>
<dbReference type="FunCoup" id="Q68EH7">
    <property type="interactions" value="128"/>
</dbReference>
<dbReference type="STRING" id="7955.ENSDARP00000093913"/>
<dbReference type="PaxDb" id="7955-ENSDARP00000093913"/>
<dbReference type="Ensembl" id="ENSDART00000103139">
    <property type="protein sequence ID" value="ENSDARP00000093913"/>
    <property type="gene ID" value="ENSDARG00000070346"/>
</dbReference>
<dbReference type="GeneID" id="449648"/>
<dbReference type="KEGG" id="dre:449648"/>
<dbReference type="AGR" id="ZFIN:ZDB-GENE-990415-114"/>
<dbReference type="CTD" id="449648"/>
<dbReference type="ZFIN" id="ZDB-GENE-990415-114">
    <property type="gene designation" value="hoxc8a"/>
</dbReference>
<dbReference type="eggNOG" id="KOG0489">
    <property type="taxonomic scope" value="Eukaryota"/>
</dbReference>
<dbReference type="HOGENOM" id="CLU_061398_1_0_1"/>
<dbReference type="InParanoid" id="Q68EH7"/>
<dbReference type="OMA" id="PSIMFPW"/>
<dbReference type="OrthoDB" id="6159439at2759"/>
<dbReference type="PhylomeDB" id="Q68EH7"/>
<dbReference type="TreeFam" id="TF316310"/>
<dbReference type="Reactome" id="R-DRE-9762293">
    <property type="pathway name" value="Regulation of CDH11 gene transcription"/>
</dbReference>
<dbReference type="PRO" id="PR:Q68EH7"/>
<dbReference type="Proteomes" id="UP000000437">
    <property type="component" value="Chromosome 23"/>
</dbReference>
<dbReference type="Bgee" id="ENSDARG00000070346">
    <property type="expression patterns" value="Expressed in swim bladder and 48 other cell types or tissues"/>
</dbReference>
<dbReference type="ExpressionAtlas" id="Q68EH7">
    <property type="expression patterns" value="baseline"/>
</dbReference>
<dbReference type="GO" id="GO:0005634">
    <property type="term" value="C:nucleus"/>
    <property type="evidence" value="ECO:0000318"/>
    <property type="project" value="GO_Central"/>
</dbReference>
<dbReference type="GO" id="GO:0000981">
    <property type="term" value="F:DNA-binding transcription factor activity, RNA polymerase II-specific"/>
    <property type="evidence" value="ECO:0000318"/>
    <property type="project" value="GO_Central"/>
</dbReference>
<dbReference type="GO" id="GO:0000977">
    <property type="term" value="F:RNA polymerase II transcription regulatory region sequence-specific DNA binding"/>
    <property type="evidence" value="ECO:0000318"/>
    <property type="project" value="GO_Central"/>
</dbReference>
<dbReference type="GO" id="GO:0035118">
    <property type="term" value="P:embryonic pectoral fin morphogenesis"/>
    <property type="evidence" value="ECO:0000316"/>
    <property type="project" value="ZFIN"/>
</dbReference>
<dbReference type="GO" id="GO:0031018">
    <property type="term" value="P:endocrine pancreas development"/>
    <property type="evidence" value="ECO:0000316"/>
    <property type="project" value="ZFIN"/>
</dbReference>
<dbReference type="GO" id="GO:0031017">
    <property type="term" value="P:exocrine pancreas development"/>
    <property type="evidence" value="ECO:0000316"/>
    <property type="project" value="ZFIN"/>
</dbReference>
<dbReference type="GO" id="GO:0006357">
    <property type="term" value="P:regulation of transcription by RNA polymerase II"/>
    <property type="evidence" value="ECO:0000318"/>
    <property type="project" value="GO_Central"/>
</dbReference>
<dbReference type="GO" id="GO:0036268">
    <property type="term" value="P:swimming"/>
    <property type="evidence" value="ECO:0007669"/>
    <property type="project" value="Ensembl"/>
</dbReference>
<dbReference type="CDD" id="cd00086">
    <property type="entry name" value="homeodomain"/>
    <property type="match status" value="1"/>
</dbReference>
<dbReference type="FunFam" id="1.10.10.60:FF:000072">
    <property type="entry name" value="Homeobox protein Hox-B8"/>
    <property type="match status" value="1"/>
</dbReference>
<dbReference type="Gene3D" id="1.10.10.60">
    <property type="entry name" value="Homeodomain-like"/>
    <property type="match status" value="1"/>
</dbReference>
<dbReference type="InterPro" id="IPR050948">
    <property type="entry name" value="Antp_homeobox_TF"/>
</dbReference>
<dbReference type="InterPro" id="IPR001356">
    <property type="entry name" value="HD"/>
</dbReference>
<dbReference type="InterPro" id="IPR020479">
    <property type="entry name" value="HD_metazoa"/>
</dbReference>
<dbReference type="InterPro" id="IPR001827">
    <property type="entry name" value="Homeobox_Antennapedia_CS"/>
</dbReference>
<dbReference type="InterPro" id="IPR017970">
    <property type="entry name" value="Homeobox_CS"/>
</dbReference>
<dbReference type="InterPro" id="IPR009057">
    <property type="entry name" value="Homeodomain-like_sf"/>
</dbReference>
<dbReference type="PANTHER" id="PTHR46166">
    <property type="entry name" value="HOMEOBOX DOMAIN-CONTAINING PROTEIN"/>
    <property type="match status" value="1"/>
</dbReference>
<dbReference type="PANTHER" id="PTHR46166:SF4">
    <property type="entry name" value="HOMEOBOX PROTEIN HOX-C8"/>
    <property type="match status" value="1"/>
</dbReference>
<dbReference type="Pfam" id="PF00046">
    <property type="entry name" value="Homeodomain"/>
    <property type="match status" value="1"/>
</dbReference>
<dbReference type="PRINTS" id="PR00024">
    <property type="entry name" value="HOMEOBOX"/>
</dbReference>
<dbReference type="SMART" id="SM00389">
    <property type="entry name" value="HOX"/>
    <property type="match status" value="1"/>
</dbReference>
<dbReference type="SUPFAM" id="SSF46689">
    <property type="entry name" value="Homeodomain-like"/>
    <property type="match status" value="1"/>
</dbReference>
<dbReference type="PROSITE" id="PS00032">
    <property type="entry name" value="ANTENNAPEDIA"/>
    <property type="match status" value="1"/>
</dbReference>
<dbReference type="PROSITE" id="PS00027">
    <property type="entry name" value="HOMEOBOX_1"/>
    <property type="match status" value="1"/>
</dbReference>
<dbReference type="PROSITE" id="PS50071">
    <property type="entry name" value="HOMEOBOX_2"/>
    <property type="match status" value="1"/>
</dbReference>
<keyword id="KW-0217">Developmental protein</keyword>
<keyword id="KW-0238">DNA-binding</keyword>
<keyword id="KW-0371">Homeobox</keyword>
<keyword id="KW-0539">Nucleus</keyword>
<keyword id="KW-1185">Reference proteome</keyword>
<keyword id="KW-0804">Transcription</keyword>
<keyword id="KW-0805">Transcription regulation</keyword>